<dbReference type="EMBL" id="L23478">
    <property type="protein sequence ID" value="AAA16204.1"/>
    <property type="molecule type" value="Genomic_DNA"/>
</dbReference>
<dbReference type="SMR" id="P38015"/>
<dbReference type="GO" id="GO:0005737">
    <property type="term" value="C:cytoplasm"/>
    <property type="evidence" value="ECO:0007669"/>
    <property type="project" value="UniProtKB-ARBA"/>
</dbReference>
<dbReference type="GO" id="GO:1990904">
    <property type="term" value="C:ribonucleoprotein complex"/>
    <property type="evidence" value="ECO:0007669"/>
    <property type="project" value="UniProtKB-KW"/>
</dbReference>
<dbReference type="GO" id="GO:0005840">
    <property type="term" value="C:ribosome"/>
    <property type="evidence" value="ECO:0007669"/>
    <property type="project" value="UniProtKB-KW"/>
</dbReference>
<dbReference type="GO" id="GO:0003735">
    <property type="term" value="F:structural constituent of ribosome"/>
    <property type="evidence" value="ECO:0007669"/>
    <property type="project" value="InterPro"/>
</dbReference>
<dbReference type="GO" id="GO:0006412">
    <property type="term" value="P:translation"/>
    <property type="evidence" value="ECO:0007669"/>
    <property type="project" value="UniProtKB-UniRule"/>
</dbReference>
<dbReference type="HAMAP" id="MF_00251">
    <property type="entry name" value="Ribosomal_bL36"/>
    <property type="match status" value="1"/>
</dbReference>
<dbReference type="InterPro" id="IPR000473">
    <property type="entry name" value="Ribosomal_bL36"/>
</dbReference>
<dbReference type="InterPro" id="IPR035977">
    <property type="entry name" value="Ribosomal_bL36_sp"/>
</dbReference>
<dbReference type="NCBIfam" id="TIGR01022">
    <property type="entry name" value="rpmJ_bact"/>
    <property type="match status" value="1"/>
</dbReference>
<dbReference type="PANTHER" id="PTHR42888">
    <property type="entry name" value="50S RIBOSOMAL PROTEIN L36, CHLOROPLASTIC"/>
    <property type="match status" value="1"/>
</dbReference>
<dbReference type="PANTHER" id="PTHR42888:SF1">
    <property type="entry name" value="LARGE RIBOSOMAL SUBUNIT PROTEIN BL36C"/>
    <property type="match status" value="1"/>
</dbReference>
<dbReference type="Pfam" id="PF00444">
    <property type="entry name" value="Ribosomal_L36"/>
    <property type="match status" value="1"/>
</dbReference>
<dbReference type="SUPFAM" id="SSF57840">
    <property type="entry name" value="Ribosomal protein L36"/>
    <property type="match status" value="1"/>
</dbReference>
<dbReference type="PROSITE" id="PS00828">
    <property type="entry name" value="RIBOSOMAL_L36"/>
    <property type="match status" value="1"/>
</dbReference>
<name>RL36_MYCSP</name>
<proteinExistence type="inferred from homology"/>
<accession>P38015</accession>
<comment type="similarity">
    <text evidence="1">Belongs to the bacterial ribosomal protein bL36 family.</text>
</comment>
<comment type="caution">
    <text evidence="2">Was originally thought to originate from Chlamydia trachomatis.</text>
</comment>
<gene>
    <name type="primary">rpmJ</name>
</gene>
<organism>
    <name type="scientific">Mycoplasma sp</name>
    <dbReference type="NCBI Taxonomy" id="2108"/>
    <lineage>
        <taxon>Bacteria</taxon>
        <taxon>Bacillati</taxon>
        <taxon>Mycoplasmatota</taxon>
        <taxon>Mollicutes</taxon>
        <taxon>Mycoplasmataceae</taxon>
        <taxon>Mycoplasma</taxon>
    </lineage>
</organism>
<evidence type="ECO:0000305" key="1"/>
<evidence type="ECO:0000305" key="2">
    <source>
    </source>
</evidence>
<protein>
    <recommendedName>
        <fullName evidence="1">Large ribosomal subunit protein bL36</fullName>
    </recommendedName>
    <alternativeName>
        <fullName>50S ribosomal protein L36</fullName>
    </alternativeName>
</protein>
<reference key="1">
    <citation type="journal article" date="1993" name="J. Bacteriol.">
        <title>Cloning and characterization of the RNA polymerase alpha-subunit operon of Chlamydia trachomatis.</title>
        <authorList>
            <person name="Tan M."/>
            <person name="Klein R."/>
            <person name="Grant R."/>
            <person name="Ganem D."/>
            <person name="Engel J.N."/>
        </authorList>
    </citation>
    <scope>NUCLEOTIDE SEQUENCE [GENOMIC DNA]</scope>
</reference>
<reference key="2">
    <citation type="journal article" date="1995" name="J. Bacteriol.">
        <authorList>
            <person name="Tan M."/>
            <person name="Klein R."/>
            <person name="Grant R."/>
            <person name="Ganem D."/>
            <person name="Engel J.N."/>
        </authorList>
    </citation>
    <scope>ERRATUM OF PUBMED:8226662</scope>
    <scope>CORRECTION OF SPECIES OF ORIGIN</scope>
</reference>
<feature type="chain" id="PRO_0000126220" description="Large ribosomal subunit protein bL36">
    <location>
        <begin position="1"/>
        <end position="37"/>
    </location>
</feature>
<keyword id="KW-0687">Ribonucleoprotein</keyword>
<keyword id="KW-0689">Ribosomal protein</keyword>
<sequence length="37" mass="4406">MKVRASIKRICKDCKIIKRHGVNRVICINFKHKQRQG</sequence>